<sequence>MGMRMMFTVFLLVVLATTVVSSTSGRREFRGRNAAAKASDLVSLTDKKRGCCSDPRCNYDHPEICG</sequence>
<evidence type="ECO:0000250" key="1">
    <source>
        <dbReference type="UniProtKB" id="P56636"/>
    </source>
</evidence>
<evidence type="ECO:0000255" key="2"/>
<evidence type="ECO:0000269" key="3">
    <source>
    </source>
</evidence>
<evidence type="ECO:0000269" key="4">
    <source>
    </source>
</evidence>
<evidence type="ECO:0000269" key="5">
    <source>
    </source>
</evidence>
<evidence type="ECO:0000269" key="6">
    <source>
    </source>
</evidence>
<evidence type="ECO:0000269" key="7">
    <source>
    </source>
</evidence>
<evidence type="ECO:0000269" key="8">
    <source>
    </source>
</evidence>
<evidence type="ECO:0000269" key="9">
    <source>
    </source>
</evidence>
<evidence type="ECO:0000269" key="10">
    <source>
    </source>
</evidence>
<evidence type="ECO:0000269" key="11">
    <source>
    </source>
</evidence>
<evidence type="ECO:0000269" key="12">
    <source>
    </source>
</evidence>
<evidence type="ECO:0000269" key="13">
    <source>
    </source>
</evidence>
<evidence type="ECO:0000269" key="14">
    <source>
    </source>
</evidence>
<evidence type="ECO:0000269" key="15">
    <source>
    </source>
</evidence>
<evidence type="ECO:0000269" key="16">
    <source>
    </source>
</evidence>
<evidence type="ECO:0000269" key="17">
    <source>
    </source>
</evidence>
<evidence type="ECO:0000269" key="18">
    <source>
    </source>
</evidence>
<evidence type="ECO:0000303" key="19">
    <source>
    </source>
</evidence>
<evidence type="ECO:0000303" key="20">
    <source>
    </source>
</evidence>
<evidence type="ECO:0000303" key="21">
    <source>
    </source>
</evidence>
<evidence type="ECO:0000305" key="22"/>
<evidence type="ECO:0000305" key="23">
    <source>
    </source>
</evidence>
<evidence type="ECO:0000305" key="24">
    <source>
    </source>
</evidence>
<evidence type="ECO:0000305" key="25">
    <source>
    </source>
</evidence>
<evidence type="ECO:0000305" key="26">
    <source>
    </source>
</evidence>
<evidence type="ECO:0000305" key="27">
    <source>
    </source>
</evidence>
<evidence type="ECO:0000305" key="28">
    <source>
    </source>
</evidence>
<evidence type="ECO:0000312" key="29">
    <source>
        <dbReference type="PDB" id="2H8S"/>
    </source>
</evidence>
<evidence type="ECO:0000312" key="30">
    <source>
        <dbReference type="PDB" id="4TTL"/>
    </source>
</evidence>
<evidence type="ECO:0000312" key="31">
    <source>
        <dbReference type="PDB" id="6CGX"/>
    </source>
</evidence>
<evidence type="ECO:0007829" key="32">
    <source>
        <dbReference type="PDB" id="4TTL"/>
    </source>
</evidence>
<organism>
    <name type="scientific">Conus victoriae</name>
    <name type="common">Queen Victoria cone</name>
    <dbReference type="NCBI Taxonomy" id="319920"/>
    <lineage>
        <taxon>Eukaryota</taxon>
        <taxon>Metazoa</taxon>
        <taxon>Spiralia</taxon>
        <taxon>Lophotrochozoa</taxon>
        <taxon>Mollusca</taxon>
        <taxon>Gastropoda</taxon>
        <taxon>Caenogastropoda</taxon>
        <taxon>Neogastropoda</taxon>
        <taxon>Conoidea</taxon>
        <taxon>Conidae</taxon>
        <taxon>Conus</taxon>
        <taxon>Cylinder</taxon>
    </lineage>
</organism>
<proteinExistence type="evidence at protein level"/>
<keyword id="KW-0002">3D-structure</keyword>
<keyword id="KW-0008">Acetylcholine receptor inhibiting toxin</keyword>
<keyword id="KW-0027">Amidation</keyword>
<keyword id="KW-0165">Cleavage on pair of basic residues</keyword>
<keyword id="KW-1015">Disulfide bond</keyword>
<keyword id="KW-1213">G-protein coupled receptor impairing toxin</keyword>
<keyword id="KW-0301">Gamma-carboxyglutamic acid</keyword>
<keyword id="KW-0379">Hydroxylation</keyword>
<keyword id="KW-0872">Ion channel impairing toxin</keyword>
<keyword id="KW-0528">Neurotoxin</keyword>
<keyword id="KW-0582">Pharmaceutical</keyword>
<keyword id="KW-0629">Postsynaptic neurotoxin</keyword>
<keyword id="KW-0964">Secreted</keyword>
<keyword id="KW-0732">Signal</keyword>
<keyword id="KW-0800">Toxin</keyword>
<accession>P69747</accession>
<feature type="signal peptide" evidence="2">
    <location>
        <begin position="1"/>
        <end position="25"/>
    </location>
</feature>
<feature type="propeptide" id="PRO_0000034896" evidence="22">
    <location>
        <begin position="26"/>
        <end position="47"/>
    </location>
</feature>
<feature type="peptide" id="PRO_0000034897" description="Alpha-conotoxin Vc1a" evidence="23">
    <location>
        <begin position="50"/>
        <end position="65"/>
    </location>
</feature>
<feature type="region of interest" description="Ser-Xaa-Pro motif, crucial for potent interaction with nAChR" evidence="1">
    <location>
        <begin position="53"/>
        <end position="55"/>
    </location>
</feature>
<feature type="region of interest" description="Key region for inhibition of alpha-9-alpha-10/CHRNA9-CHRNA10 nAChR" evidence="27">
    <location>
        <begin position="54"/>
        <end position="56"/>
    </location>
</feature>
<feature type="region of interest" description="Key region for inhibition of alpha-9-alpha-10/CHRNA9-CHRNA10 nAChR" evidence="27">
    <location>
        <begin position="60"/>
        <end position="64"/>
    </location>
</feature>
<feature type="modified residue" description="4-hydroxyproline" evidence="4">
    <location>
        <position position="55"/>
    </location>
</feature>
<feature type="modified residue" description="4-carboxyglutamate" evidence="4">
    <location>
        <position position="63"/>
    </location>
</feature>
<feature type="modified residue" description="Cysteine amide" evidence="4">
    <location>
        <position position="65"/>
    </location>
</feature>
<feature type="disulfide bond" evidence="6 14 17 29 30 31">
    <location>
        <begin position="51"/>
        <end position="57"/>
    </location>
</feature>
<feature type="disulfide bond" evidence="6 14 17 29 30 31">
    <location>
        <begin position="52"/>
        <end position="65"/>
    </location>
</feature>
<feature type="mutagenesis site" description="In non-hydroxylated and non-gamma-carboxylated analog; no change in potency of inhibition of rat alpha-9-alpha-10/CHRNA9-CHRNA10 nAChR. No change in potency of inhibition of HVA calcium channels in rat/mouse DRG neurons." evidence="10 17">
    <original>G</original>
    <variation>A</variation>
    <variation>D</variation>
    <location>
        <position position="50"/>
    </location>
</feature>
<feature type="mutagenesis site" description="In non-hydroxylated and non-gamma-carboxylated analog; no change in potency of inhibition of rat alpha-9-alpha-10/CHRNA9-CHRNA10 nAChR. Decrease in potency of inhibition of HVA calcium channels in rat/mouse DRG neurons." evidence="10 17">
    <original>G</original>
    <variation>K</variation>
    <location>
        <position position="50"/>
    </location>
</feature>
<feature type="mutagenesis site" description="In [C3S]Vc1.1(1-8); shows similar potency of inhibition of HVA calcium currents. Shows 95% inhibition of human alpha-7/CHRNA7, but no inhibition of human alpha-9-alpha-10/CHRNA9-CHRNA10 AChR; when associated with 58-N--C-65 DEL." evidence="15">
    <original>C</original>
    <variation>S</variation>
    <location>
        <position position="52"/>
    </location>
</feature>
<feature type="mutagenesis site" description="In non-hydroxylated and non-gamma-carboxylated analog; 2.5-fold decrease in potency of inhibition of rat alpha-9-alpha-10/CHRNA9-CHRNA10 nAChR. Decrease in potency of inhibition of HVA calcium channels in rat/mouse DRG neurons." evidence="10 17">
    <original>S</original>
    <variation>A</variation>
    <location>
        <position position="53"/>
    </location>
</feature>
<feature type="mutagenesis site" description="In non-hydroxylated and non-gamma-carboxylated analog; 1.7-fold decrease in potency of inhibition of rat alpha-9-alpha-10/CHRNA9-CHRNA10 nAChR. No change in potency of inhibition of HVA calcium channels in rat/mouse DRG neurons." evidence="10 17">
    <original>S</original>
    <variation>D</variation>
    <location>
        <position position="53"/>
    </location>
</feature>
<feature type="mutagenesis site" description="In non-hydroxylated and non-gamma-carboxylated analog; 1.7-fold increase in potency of inhibition of rat alpha-9-alpha-10/CHRNA9-CHRNA10 nAChR. No change in potency of inhibition of HVA calcium channels in rat/mouse DRG neurons. 2-fold increase in potency of inhibition of rat alpha-9-alpha-10/CHRNA9-CHRNA10 nAChR; when associated with A-58." evidence="10 17">
    <original>S</original>
    <variation>K</variation>
    <location>
        <position position="53"/>
    </location>
</feature>
<feature type="mutagenesis site" description="In non-hydroxylated and non-gamma-carboxylated analog; almost complete loss of potency of inhibition of rat alpha-9-alpha-10/CHRNA9-CHRNA10 nAChR. Decrease in potency of inhibition of HVA calcium channels in rat/mouse DRG neurons." evidence="10 17">
    <original>D</original>
    <variation>A</variation>
    <variation>K</variation>
    <location>
        <position position="54"/>
    </location>
</feature>
<feature type="mutagenesis site" description="In non-hydroxylated and non-gamma-carboxylated analog; almost complete loss of potency of inhibition of rat alpha-9-alpha-10/CHRNA9-CHRNA10 nAChR. Decrease in potency of inhibition of HVA calcium channels in rat/mouse DRG neurons." evidence="10 17">
    <original>P</original>
    <variation>A</variation>
    <variation>D</variation>
    <variation>K</variation>
    <location>
        <position position="55"/>
    </location>
</feature>
<feature type="mutagenesis site" description="In non-hydroxylated and non-gamma-carboxylated analog; almost complete loss of potency of inhibition of rat alpha-9-alpha-10/CHRNA9-CHRNA10 nAChR. Decrease in potency of inhibition of HVA calcium channels in rat/mouse DRG neurons." evidence="10 17">
    <original>R</original>
    <variation>A</variation>
    <variation>D</variation>
    <variation>K</variation>
    <location>
        <position position="56"/>
    </location>
</feature>
<feature type="mutagenesis site" description="In [C3S]Vc1.1(1-8); shows similar potency of inhibition of HVA calcium currents. Shows 95% inhibition of human alpha-7/CHRNA7, but no inhibition of human alpha-9-alpha-10/CHRNA9-CHRNA10 AChR; when associated with S-52." evidence="15">
    <location>
        <begin position="58"/>
        <end position="65"/>
    </location>
</feature>
<feature type="mutagenesis site" description="In non-hydroxylated and non-gamma-carboxylated analog; 2.2-fold increase in potency of inhibition of rat alpha-9-alpha-10/CHRNA9-CHRNA10 nAChR. 30-fold increase in potency of inhibition of rat alpha-3-beta-2/CHRNA3-CHRNB2 nAChR. Decrease in potency of inhibition of HVA calcium channels in rat/mouse DRG neurons. 2-fold increase in potency of inhibition of rat alpha-9-alpha-10/CHRNA9-CHRNA10 nAChR; when associated with K-53." evidence="10 17">
    <original>N</original>
    <variation>A</variation>
    <location>
        <position position="58"/>
    </location>
</feature>
<feature type="mutagenesis site" description="In non-hydroxylated and non-gamma-carboxylated analog; no change in potency of inhibition of rat alpha-9-alpha-10/CHRNA9-CHRNA10 nAChR. No change in potency of inhibition of HVA calcium channels in rat/mouse DRG neurons." evidence="10 17">
    <original>N</original>
    <variation>D</variation>
    <location>
        <position position="58"/>
    </location>
</feature>
<feature type="mutagenesis site" description="In non-hydroxylated and non-gamma-carboxylated analog; 1.9-fold increase in potency of inhibition of rat alpha-9-alpha-10/CHRNA9-CHRNA10 nAChR." evidence="10">
    <original>N</original>
    <variation>G</variation>
    <location>
        <position position="58"/>
    </location>
</feature>
<feature type="mutagenesis site" description="In non-hydroxylated and non-gamma-carboxylated analog; 1.7-fold increase in potency of inhibition of rat alpha-9-alpha-10/CHRNA9-CHRNA10 nAChR. 25-fold increase in potency of inhibition of rat alpha-3-beta-2/CHRNA3-CHRNB2 nAChR. 7-fold increase in potency of inhibition of rat alpha-7/CHRNA7 nAChR." evidence="10">
    <original>N</original>
    <variation>I</variation>
    <location>
        <position position="58"/>
    </location>
</feature>
<feature type="mutagenesis site" description="In non-hydroxylated and non-gamma-carboxylated analog; complete loss of potency of inhibition of rat alpha-9-alpha-10/CHRNA9-CHRNA10 nAChR. No change in potency of inhibition of HVA calcium channels in rat/mouse DRG neurons." evidence="10 17">
    <original>N</original>
    <variation>K</variation>
    <location>
        <position position="58"/>
    </location>
</feature>
<feature type="mutagenesis site" description="In non-hydroxylated and non-gamma-carboxylated analog; 1.7-fold increase in potency of inhibition of rat alpha-9-alpha-10/CHRNA9-CHRNA10 nAChR. 2-fold increase in potency of inhibition of rat alpha-3-beta-2/CHRNA3-CHRNB2 nAChR." evidence="10">
    <original>N</original>
    <variation>L</variation>
    <location>
        <position position="58"/>
    </location>
</feature>
<feature type="mutagenesis site" description="In non-hydroxylated and non-gamma-carboxylated analog; no change in potency of inhibition of rat alpha-9-alpha-10/CHRNA9-CHRNA10 nAChR. Decrease in potency of inhibition of HVA calcium channels in rat/mouse DRG neurons." evidence="10 17">
    <original>Y</original>
    <variation>A</variation>
    <variation>K</variation>
    <location>
        <position position="59"/>
    </location>
</feature>
<feature type="mutagenesis site" description="In non-hydroxylated and non-gamma-carboxylated analog; 5-fold decrease in potency of inhibition of rat alpha-9-alpha-10/CHRNA9-CHRNA10 nAChR. Decrease in potency of inhibition of HVA calcium channels in rat/mouse DRG neurons." evidence="10 17">
    <original>Y</original>
    <variation>D</variation>
    <location>
        <position position="59"/>
    </location>
</feature>
<feature type="mutagenesis site" description="In non-hydroxylated and non-gamma-carboxylated analog; 5-fold decrease in potency of inhibition of rat alpha-9-alpha-10/CHRNA9-CHRNA10 nAChR. No change in potency of inhibition of HVA calcium channels in rat/mouse DRG neurons. Toxin cVc1.1[D11A; E14A]; important decrease in potency of inhibition of alpha-9-alpha-10/CHRNA9-CHRNA10 nAChR, and very potent in inhibition of HVA calcium channels in mouse DRG neurons; when associated with A-63 and G-66--71-G." evidence="10 17">
    <original>D</original>
    <variation>A</variation>
    <location>
        <position position="60"/>
    </location>
</feature>
<feature type="mutagenesis site" description="In non-hydroxylated and non-gamma-carboxylated analog; 5-fold decrease in potency of inhibition of rat alpha-9-alpha-10/CHRNA9-CHRNA10 nAChR. No change in potency of inhibition of HVA calcium channels in rat/mouse DRG neurons." evidence="10 17">
    <original>D</original>
    <variation>K</variation>
    <location>
        <position position="60"/>
    </location>
</feature>
<feature type="mutagenesis site" description="In non-hydroxylated and non-gamma-carboxylated analog; 10-fold decrease in potency of inhibition of rat alpha-9-alpha-10/CHRNA9-CHRNA10 nAChR. Decrease in potency of inhibition of HVA calcium channels in rat/mouse DRG neurons." evidence="10 17">
    <original>H</original>
    <variation>A</variation>
    <location>
        <position position="61"/>
    </location>
</feature>
<feature type="mutagenesis site" description="In non-hydroxylated and non-gamma-carboxylated analog; about 4.1-fold decrease in potency of inhibition of rat alpha-9-alpha-10/CHRNA9-CHRNA10 nAChR. Decrease in potency of inhibition of HVA calcium channels in rat/mouse DRG neurons." evidence="10 17">
    <original>H</original>
    <variation>D</variation>
    <variation>K</variation>
    <location>
        <position position="61"/>
    </location>
</feature>
<feature type="mutagenesis site" description="In non-hydroxylated and non-gamma-carboxylated analog; 3.3-fold decrease in potency of inhibition of rat alpha-9-alpha-10/CHRNA9-CHRNA10 nAChR. Decrease in potency of inhibition of HVA calcium channels in rat/mouse DRG neurons." evidence="10 17">
    <original>P</original>
    <variation>A</variation>
    <location>
        <position position="62"/>
    </location>
</feature>
<feature type="mutagenesis site" description="In non-hydroxylated and non-gamma-carboxylated analog; complete loss of potency of inhibition of rat alpha-9-alpha-10/CHRNA9-CHRNA10 nAChR. Decrease in potency of inhibition of HVA calcium channels in rat/mouse DRG neurons." evidence="10 17">
    <original>P</original>
    <variation>D</variation>
    <variation>K</variation>
    <location>
        <position position="62"/>
    </location>
</feature>
<feature type="mutagenesis site" description="In non-hydroxylated and non-gamma-carboxylated analog; about 3.3-fold decrease in potency of inhibition of rat alpha-9-alpha-10/CHRNA9-CHRNA10 nAChR. No change in potency of inhibition of HVA calcium channels in rat/mouse DRG neurons. Toxin cVc1.1[D11A; E14A]; important decrease in potency of inhibition of alpha-9-alpha-10/CHRNA9-CHRNA10 nAChR, and very potent in inhibition of HVA calcium channels in mouse DRG neurons; when associated with A-60 and G-66--71-G." evidence="10 17">
    <original>E</original>
    <variation>A</variation>
    <location>
        <position position="63"/>
    </location>
</feature>
<feature type="mutagenesis site" description="In non-hydroxylated and non-gamma-carboxylated analog; about 2-fold decrease in potency of inhibition of rat alpha-9-alpha-10/CHRNA9-CHRNA10 nAChR. No change in potency of inhibition of HVA calcium channels in rat/mouse DRG neurons." evidence="10 17">
    <original>E</original>
    <variation>D</variation>
    <location>
        <position position="63"/>
    </location>
</feature>
<feature type="mutagenesis site" description="In non-hydroxylated and non-gamma-carboxylated analog; about 3-fold decrease in potency of inhibition of rat alpha-9-alpha-10/CHRNA9-CHRNA10 nAChR. Decrease in potency of inhibition of HVA calcium channels in rat/mouse DRG neurons." evidence="10 17">
    <original>E</original>
    <variation>K</variation>
    <location>
        <position position="63"/>
    </location>
</feature>
<feature type="mutagenesis site" description="In non-hydroxylated and non-gamma-carboxylated analog; 5-fold decrease in potency of inhibition of rat alpha-9-alpha-10/CHRNA9-CHRNA10 nAChR. No change in potency of inhibition of HVA calcium channels in rat/mouse DRG neurons." evidence="10 17">
    <original>I</original>
    <variation>A</variation>
    <location>
        <position position="64"/>
    </location>
</feature>
<feature type="mutagenesis site" description="In non-hydroxylated and non-gamma-carboxylated analog; complete loss of potency of inhibition of rat alpha-9-alpha-10/CHRNA9-CHRNA10 nAChR. No change in potency of inhibition of HVA calcium channels in rat/mouse DRG neurons." evidence="10 17">
    <original>I</original>
    <variation>D</variation>
    <location>
        <position position="64"/>
    </location>
</feature>
<feature type="mutagenesis site" description="In non-hydroxylated and non-gamma-carboxylated analog; 2.5-fold decrease in potency of inhibition of rat alpha-9-alpha-10/CHRNA9-CHRNA10 nAChR. Decrease in potency of inhibition of HVA calcium channels in rat/mouse DRG neurons." evidence="10 17">
    <original>I</original>
    <variation>K</variation>
    <location>
        <position position="64"/>
    </location>
</feature>
<feature type="mutagenesis site" description="In non-hydroxylated and non-gamma-carboxylated analog dimer; no important change in activity on alpha-9-alpha-10/CHRNA9-CHRNA10 nAChRs and on alpha-7/CHRNA7 nAChRs." evidence="18">
    <original>C</original>
    <variation>CGRRRRGGCCSDPRCNYDHPEIC</variation>
    <location>
        <position position="65"/>
    </location>
</feature>
<feature type="mutagenesis site" description="Toxin cVc1.1[D11A; E14A]; important decrease in potency of inhibition of alpha-9-alpha-10/CHRNA9-CHRNA10 nAChR and very potent in inhibition of HVA calcium channels in mouse DRG neurons; when associated with A-60 and A-63." evidence="17">
    <original>G</original>
    <variation>GGAAGG</variation>
    <location>
        <position position="66"/>
    </location>
</feature>
<feature type="helix" evidence="32">
    <location>
        <begin position="51"/>
        <end position="53"/>
    </location>
</feature>
<feature type="helix" evidence="32">
    <location>
        <begin position="55"/>
        <end position="60"/>
    </location>
</feature>
<feature type="helix" evidence="32">
    <location>
        <begin position="62"/>
        <end position="65"/>
    </location>
</feature>
<dbReference type="PDB" id="2H8S">
    <property type="method" value="NMR"/>
    <property type="chains" value="A=50-65"/>
</dbReference>
<dbReference type="PDB" id="2MFX">
    <property type="method" value="NMR"/>
    <property type="chains" value="A=50-65"/>
</dbReference>
<dbReference type="PDB" id="2MFY">
    <property type="method" value="NMR"/>
    <property type="chains" value="A=50-65"/>
</dbReference>
<dbReference type="PDB" id="2MG6">
    <property type="method" value="NMR"/>
    <property type="chains" value="A=50-65"/>
</dbReference>
<dbReference type="PDB" id="2N07">
    <property type="method" value="NMR"/>
    <property type="chains" value="X=50-65"/>
</dbReference>
<dbReference type="PDB" id="4TTL">
    <property type="method" value="X-ray"/>
    <property type="resolution" value="1.70 A"/>
    <property type="chains" value="A=50-65"/>
</dbReference>
<dbReference type="PDB" id="6CGX">
    <property type="method" value="NMR"/>
    <property type="chains" value="A=50-65"/>
</dbReference>
<dbReference type="PDB" id="7KNN">
    <property type="method" value="NMR"/>
    <property type="chains" value="A=50-65"/>
</dbReference>
<dbReference type="PDBsum" id="2H8S"/>
<dbReference type="PDBsum" id="2MFX"/>
<dbReference type="PDBsum" id="2MFY"/>
<dbReference type="PDBsum" id="2MG6"/>
<dbReference type="PDBsum" id="2N07"/>
<dbReference type="PDBsum" id="4TTL"/>
<dbReference type="PDBsum" id="6CGX"/>
<dbReference type="PDBsum" id="7KNN"/>
<dbReference type="BMRB" id="P69747"/>
<dbReference type="SMR" id="P69747"/>
<dbReference type="ConoServer" id="499">
    <property type="toxin name" value="VcIA precursor"/>
</dbReference>
<dbReference type="EvolutionaryTrace" id="P69747"/>
<dbReference type="GO" id="GO:0005576">
    <property type="term" value="C:extracellular region"/>
    <property type="evidence" value="ECO:0007669"/>
    <property type="project" value="UniProtKB-SubCell"/>
</dbReference>
<dbReference type="GO" id="GO:0035792">
    <property type="term" value="C:host cell postsynaptic membrane"/>
    <property type="evidence" value="ECO:0007669"/>
    <property type="project" value="UniProtKB-KW"/>
</dbReference>
<dbReference type="GO" id="GO:0030550">
    <property type="term" value="F:acetylcholine receptor inhibitor activity"/>
    <property type="evidence" value="ECO:0007669"/>
    <property type="project" value="UniProtKB-KW"/>
</dbReference>
<dbReference type="GO" id="GO:0099106">
    <property type="term" value="F:ion channel regulator activity"/>
    <property type="evidence" value="ECO:0007669"/>
    <property type="project" value="UniProtKB-KW"/>
</dbReference>
<dbReference type="GO" id="GO:0090729">
    <property type="term" value="F:toxin activity"/>
    <property type="evidence" value="ECO:0007669"/>
    <property type="project" value="UniProtKB-KW"/>
</dbReference>
<dbReference type="InterPro" id="IPR009958">
    <property type="entry name" value="Conotoxin_a-typ"/>
</dbReference>
<dbReference type="InterPro" id="IPR018072">
    <property type="entry name" value="Conotoxin_a-typ_CS"/>
</dbReference>
<dbReference type="Pfam" id="PF07365">
    <property type="entry name" value="Toxin_8"/>
    <property type="match status" value="1"/>
</dbReference>
<dbReference type="PROSITE" id="PS60014">
    <property type="entry name" value="ALPHA_CONOTOXIN"/>
    <property type="match status" value="1"/>
</dbReference>
<protein>
    <recommendedName>
        <fullName evidence="20">Alpha-conotoxin Vc1a</fullName>
        <shortName>Alpha-Vc1a</shortName>
    </recommendedName>
    <alternativeName>
        <fullName evidence="21">ACV1</fullName>
    </alternativeName>
    <alternativeName>
        <fullName evidence="19">Vc1.1</fullName>
    </alternativeName>
</protein>
<comment type="function">
    <text evidence="8 9">Alpha-conotoxins act on postsynaptic membranes, they bind to the nicotinic acetylcholine receptors (nAChR) and thus inhibit them. This toxin (native toxin Vc1a; hydroxylated and gamma-carboxylated) blocks alpha-9-alpha-10/CHRNA9-CHRNA10 nAChRs (IC(50)=62.9 nM) (PubMed:17804600). In contrast to the non-post-translationally modified analog Vc1.1, Vc1a does not inhibit high voltage-activated (HVA) calcium channel currents (PubMed:18945902). In vivo, in contrast to Vc1.1, Vc1a does not show analgesic effects in rat models of neuropathic pain (PubMed:17804600).</text>
</comment>
<comment type="function">
    <text evidence="3 5 7 8 9 10 11 12 13 15">The synthetic peptide Vc1.1 (a non-hydroxylated and non-gamma-carboxylated analog of Vc1a) has two types of targets. It blocks alpha-9-alpha-10/CHRNA9-CHRNA10 nAChRs (on rat receptors, IC(50)=19-109 nM) (with preference for rat over human receptors) and inhibits high voltage-activated (HVA) calcium channel (Cav2.2, Cav2.3) currents by acting on GABA(B) receptors (GABBR1 and GABBR2) (IC(50)=1.7 nM) (PubMed:17101979, PubMed:17804600, PubMed:18945902, PubMed:19447885, PubMed:20533477, PubMed:23566299, PubMed:23768016, PubMed:26948522). It also shows moderate inhibition on alpha-6/alpha-3-beta-2-beta-3 (CHRNA6/CHRNA3-CHRNB2-CHRNB3) (IC(50)=140 nM) and alpha-6/alpha-3-beta-4 (CHRNA6/CHRNA3-CHRNB4) (IC(50)=980 nM) (PubMed:17101979). On alpha-9-alpha-10/CHRNA9-CHRNA10 nAChR, it most likely interacts with the alpha-10(+)/alpha-9(-)interface of the receptor (PubMed:23566299). In vivo, it acts as a powerful analgesic in rat models of neuropathic pain (PubMed:17804600).</text>
</comment>
<comment type="subcellular location">
    <subcellularLocation>
        <location evidence="4">Secreted</location>
    </subcellularLocation>
</comment>
<comment type="tissue specificity">
    <text evidence="24">Expressed by the venom duct.</text>
</comment>
<comment type="domain">
    <text evidence="22">The cysteine framework is I (CC-C-C). Alpha4/7 pattern.</text>
</comment>
<comment type="PTM">
    <text evidence="25 26">Vc1.1 is described as having no post-translational modifications (except C-terminal amidation), whereas Vc1a contains a hydroxyproline at Pro-55 and a 4-carboxyglutamate at Glu-63 (and a C-terminal amidation) (PubMed:17101979, PubMed:17804600).</text>
</comment>
<comment type="PTM">
    <text evidence="8 9">Hydroxylation of Pro-55 is not important for inhibition of alpha-9-alpha-10/CHRNA9-CHRNA10 nAChRs, since [P6O]Vc1.1 (Pro-55 hydroxylated) shows similar inhibition than native toxin (IC(50)=99.1 nM) (PubMed:17804600). In contrast, hydroxylation of Pro-55 seems to impair inhibition of HVA calcium channel currents, since [P6O]Vc1.1 has no effect on HVA calcium channel currents (PubMed:18945902). In vivo, hydroxylation of Pro-55 seems to induce the loss of analgesic effects in rat models of neuropathic pain, since [P6O]Vc1.1 has no effect on mechanical allodynia (PubMed:17804600).</text>
</comment>
<comment type="PTM">
    <text evidence="8 9">Gamma-carboxylation of Glu-63 is not important for inhibition of alpha-9-alpha-10/CHRNA9-CHRNA10 nAChRs, since [E14gamma]Vc1.1 (carboxyglutamate at Glu-63) shows similar inhibition than native toxin (IC(50)=65.3 nM) (PubMed:17804600). In contrast, gamma-carboxylation of Glu-63 seems to impair inhibition of HVA calcium channel currents, since [E14gamma]Vc1.1 has no effect on HVA calcium channel currents (PubMed:18945902).</text>
</comment>
<comment type="PTM">
    <text evidence="15">Non-native isomers 'ribbon' (with disulfide connectivity C1-C4; C2-C3) and 'beads' (with disulfide connectivity C1-C2; C3-C4) of Vc1.1 also inhibit HVA calcium channel currents in rat DRG neurons (20-30% inhibition at 1 uM toxin) (PubMed:26948522). It has been shown that both reduced and alkylated Vc1.1 have no effect on HVA calcium channel currents. The observed activity can be attributed to specific isomers (PubMed:26948522).</text>
</comment>
<comment type="PTM">
    <text evidence="15">[C3S]Vc1.1(1-8) mutant is C-terminally amidated.</text>
</comment>
<comment type="mass spectrometry"/>
<comment type="mass spectrometry"/>
<comment type="pharmaceutical">
    <text evidence="28">Cyclic versions of Vc1.1 evoke significant anti-nociceptive actions in animal model of chronic visceral hypersensitivity (CVH), suggesting that they could be novel candidates for treatment of chronic visceral pain (CVP).</text>
</comment>
<comment type="miscellaneous">
    <text evidence="6 10 18">The synthetic peptide Vc1.1 (a non-hydroxylated and non-gamma-carboxylated analog of Vc1a) shows weak inhibition on nAChRs composed of alpha-3-alpha-5-beta-2/CHRNA3-CHRNA5-CHRNB2 (IC(50)=7.2 uM), alpha-3-beta-2/CHRNA3-CHRNB2 (IC(50)=5.5-7.3 uM), alpha-3-beta-4/CHRNA3-CHRNB4 (IC(50)=4.2 uM), alpha-3-alpha-5-beta-4/CHRNA3-CHRNA5-CHRNB4 (IC(50)&gt;30 uM), alpha-4-beta-2/CHRNA4-CHRNB2 (IC(50)&gt;30 uM), alpha-4-beta-4/CHRNA4-CHRNB4 (IC(50)&gt;30 uM), rat alpha-7/CHRNA7 (IC(50)=7.1 uM) and alpha-1-beta-1-gamma-delta/CHRNA1-CHRNB1-CHRNG-CHRND (IC(50)&gt;30 uM) subunits.</text>
</comment>
<comment type="miscellaneous">
    <text evidence="11 16 17">cVc1.1 is a cyclic peptide with inhibitory activity on alpha-9-alpha-10/CHRNA9-CHRNA10 nAChRs (IC(50)=766 nM) and a high potency at inhibiting HVA calcium channels in mice DRG neurons (IC(50)=0.3 nM) (PubMed:20533477). Toxin cVc1.1[D11A; E14A] is a cyclic peptide with a very low inhibitory activity on alpha-9-alpha-10/CHRNA9-CHRNA10 nAChRs (IC(50)&gt;17 uM) and a high potency at inhibiting HVA calcium channels in mice DRG neurons (IC(50)=3.3 nM) (PubMed:29746088). Both of them show antinociceptive actions, with greater efficacy in a model of animal chronic visceral hypersensitivity (CVH) (PubMed:29194563, PubMed:29746088).</text>
</comment>
<comment type="similarity">
    <text evidence="22">Belongs to the conotoxin A superfamily.</text>
</comment>
<name>CA1A_CONVC</name>
<reference key="1">
    <citation type="journal article" date="2003" name="Biochemistry">
        <title>A novel alpha-conotoxin identified by gene sequencing is active in suppressing the vascular response to selective stimulation of sensory nerves in vivo.</title>
        <authorList>
            <person name="Sandall D.W."/>
            <person name="Satkunanathan N."/>
            <person name="Keays D.A."/>
            <person name="Polidano M.A."/>
            <person name="Liping X."/>
            <person name="Pham V."/>
            <person name="Down J.G."/>
            <person name="Khalil Z."/>
            <person name="Livett B.G."/>
            <person name="Gayler K.R."/>
        </authorList>
    </citation>
    <scope>NUCLEOTIDE SEQUENCE [MRNA]</scope>
    <scope>FUNCTION OF VC1.1</scope>
    <scope>SYNTHESIS OF 50-65 (VC1.1)</scope>
    <source>
        <tissue>Venom duct</tissue>
    </source>
</reference>
<reference key="2">
    <citation type="journal article" date="2004" name="J. Mass Spectrom.">
        <title>Determining sequences and post-translational modifications of novel conotoxins in Conus victoriae using cDNA sequencing and mass spectrometry.</title>
        <authorList>
            <person name="Jakubowski J.A."/>
            <person name="Keays D.A."/>
            <person name="Kelley W.P."/>
            <person name="Sandall D.W."/>
            <person name="Bingham J.-P."/>
            <person name="Livett B.G."/>
            <person name="Gayler K.R."/>
            <person name="Sweedler J.V."/>
        </authorList>
    </citation>
    <scope>NUCLEOTIDE SEQUENCE [MRNA]</scope>
    <scope>MASS SPECTROMETRY</scope>
    <scope>AMIDATION AT CYS-65</scope>
    <scope>HYDROXYLATION AT PRO-55</scope>
    <scope>GAMMA-CARBOXYGLUTAMATION AT GLU-63</scope>
    <scope>SUBCELLULAR LOCATION</scope>
    <source>
        <tissue>Venom</tissue>
        <tissue>Venom duct</tissue>
    </source>
</reference>
<reference key="3">
    <citation type="journal article" date="2005" name="NeuroReport">
        <title>A conus peptide blocks nicotinic receptors of unmyelinated axons in human nerves.</title>
        <authorList>
            <person name="Lang P.M."/>
            <person name="Burgstahler R."/>
            <person name="Haberberger R.V."/>
            <person name="Sippel W."/>
            <person name="Grafe P."/>
        </authorList>
    </citation>
    <scope>FUNCTION OF VC1.1</scope>
    <scope>SYNTHESIS OF 50-65 (VC1.1)</scope>
</reference>
<reference key="4">
    <citation type="journal article" date="2006" name="Proc. Natl. Acad. Sci. U.S.A.">
        <title>Molecular mechanism for analgesia involving specific antagonism of alpha9alpha10 nicotinic acetylcholine receptors.</title>
        <authorList>
            <person name="Vincler M."/>
            <person name="Wittenauer S."/>
            <person name="Parker R."/>
            <person name="Ellison M."/>
            <person name="Olivera B.M."/>
            <person name="McIntosh J.M."/>
        </authorList>
    </citation>
    <scope>FUNCTION OF VC1.1</scope>
    <scope>SYNTHESIS OF 50-65 (VC1.1)</scope>
</reference>
<reference key="5">
    <citation type="journal article" date="2007" name="Mol. Pharmacol.">
        <title>Are alpha9alpha10 nicotinic acetylcholine receptors a pain target for alpha-conotoxins?</title>
        <authorList>
            <person name="Nevin S.T."/>
            <person name="Clark R.J."/>
            <person name="Klimis H."/>
            <person name="Christie M.J."/>
            <person name="Craik D.J."/>
            <person name="Adams D.J."/>
        </authorList>
    </citation>
    <scope>FUNCTION OF VC1A AND VC1.1</scope>
    <scope>SYNTHESIS OF 50-65 (VC1A AND VC1.1)</scope>
</reference>
<reference key="6">
    <citation type="journal article" date="2008" name="J. Neurosci.">
        <title>Analgesic alpha-conotoxins Vc1.1 and Rg1A inhibit N-type calcium channels in rat sensory neurons via GABAB receptor activation.</title>
        <authorList>
            <person name="Callaghan B."/>
            <person name="Haythornthwaite A."/>
            <person name="Berecki G."/>
            <person name="Clark R.J."/>
            <person name="Craik D.J."/>
            <person name="Adams D.J."/>
        </authorList>
    </citation>
    <scope>FUNCTION OF VC1A AND VC1.1 ON GABA(B) RECEPTOR</scope>
    <scope>SYNTHESIS OF 50-65 (VC1A AND VC1.1)</scope>
</reference>
<reference key="7">
    <citation type="journal article" date="2009" name="J. Biol. Chem.">
        <title>Scanning mutagenesis of alpha-conotoxin Vc1.1 reveals residues crucial for activity at the alpha9alpha10 nicotinic acetylcholine receptor.</title>
        <authorList>
            <person name="Halai R."/>
            <person name="Clark R.J."/>
            <person name="Nevin S.T."/>
            <person name="Jensen J.E."/>
            <person name="Adams D.J."/>
            <person name="Craik D.J."/>
        </authorList>
    </citation>
    <scope>FUNCTION OF VC1.1</scope>
    <scope>SYNTHESIS OF 50-65 (VC1.1)</scope>
    <scope>MUTAGENESIS OF GLY-50; SER-53; ASP-54; PRO-55; ARG-56; ASN-58; TYR-59; ASP-60; HIS-61; PRO-62; GLU-63 AND ILE-64</scope>
</reference>
<reference key="8">
    <citation type="journal article" date="2013" name="J. Med. Chem.">
        <title>Determination of the alpha-conotoxin Vc1.1 binding site on the alpha9alpha10 nicotinic acetylcholine receptor.</title>
        <authorList>
            <person name="Yu R."/>
            <person name="Kompella S.N."/>
            <person name="Adams D.J."/>
            <person name="Craik D.J."/>
            <person name="Kaas Q."/>
        </authorList>
    </citation>
    <scope>FUNCTION OF VC1.1</scope>
    <scope>SYNTHESIS OF 50-65 (VC1.1)</scope>
    <scope>MUTAGENESIS OF ASN-58</scope>
</reference>
<reference key="9">
    <citation type="journal article" date="2016" name="Angew. Chem. Int. Ed.">
        <title>Structure-activity studies of cysteine-rich alpha-conotoxins that inhibit high-voltage-activated calcium channels via GABA(B) receptor activation reveal a minimal functional motif.</title>
        <authorList>
            <person name="Carstens B.B."/>
            <person name="Berecki G."/>
            <person name="Daniel J.T."/>
            <person name="Lee H.S."/>
            <person name="Jackson K.A."/>
            <person name="Tae H.S."/>
            <person name="Sadeghi M."/>
            <person name="Castro J."/>
            <person name="O'Donnell T."/>
            <person name="Deiteren A."/>
            <person name="Brierley S.M."/>
            <person name="Craik D.J."/>
            <person name="Adams D.J."/>
            <person name="Clark R.J."/>
        </authorList>
    </citation>
    <scope>FUNCTION OF VC1.1</scope>
    <scope>SYNTHESIS OF 50-65 (VC1.1)</scope>
    <scope>MUTAGENESIS OF CYS-52 AND 58-ASN--CYS-65</scope>
</reference>
<reference key="10">
    <citation type="journal article" date="2018" name="Br. J. Pharmacol.">
        <title>Cyclic analogues of alpha-conotoxin Vc1.1 inhibit colonic nociceptors and provide analgesia in a mouse model of chronic abdominal pain.</title>
        <authorList>
            <person name="Castro J."/>
            <person name="Grundy L."/>
            <person name="Deiteren A."/>
            <person name="Harrington A.M."/>
            <person name="O'Donnell T."/>
            <person name="Maddern J."/>
            <person name="Moore J."/>
            <person name="Garcia-Caraballo S."/>
            <person name="Rychkov G.Y."/>
            <person name="Yu R."/>
            <person name="Kaas Q."/>
            <person name="Craik D.J."/>
            <person name="Adams D.J."/>
            <person name="Brierley S.M."/>
        </authorList>
    </citation>
    <scope>FUNCTION OF CYCLIC VC1.1</scope>
    <scope>SYNTHESIS OF 50-65 (VC1.1)</scope>
    <scope>PHARMACEUTICAL</scope>
</reference>
<reference key="11">
    <citation type="journal article" date="2020" name="J. Med. Chem.">
        <title>Dimerization of alpha-conotoxins as a strategy to enhance the inhibition of the human alpha7 and alpha9alpha10 nicotinic acetylcholine Receptors.</title>
        <authorList>
            <person name="Liang J."/>
            <person name="Tae H.S."/>
            <person name="Xu X."/>
            <person name="Jiang T."/>
            <person name="Adams D.J."/>
            <person name="Yu R."/>
        </authorList>
    </citation>
    <scope>FUNCTION</scope>
    <scope>MUTAGENESIS OF CYS-65</scope>
</reference>
<reference key="12">
    <citation type="journal article" date="2006" name="J. Biol. Chem.">
        <title>The synthesis, structural characterisation and receptor specificity of the alpha-conotoxin Vc1.1.</title>
        <authorList>
            <person name="Clark R.J."/>
            <person name="Fischer H."/>
            <person name="Nevin S.T."/>
            <person name="Adams D.J."/>
            <person name="Craik D.J."/>
        </authorList>
    </citation>
    <scope>STRUCTURE BY NMR OF 50-65 (VC1.1)</scope>
</reference>
<reference key="13">
    <citation type="journal article" date="2010" name="Angew. Chem. Int. Ed.">
        <title>The engineering of an orally active conotoxin for the treatment of neuropathic pain.</title>
        <authorList>
            <person name="Clark R.J."/>
            <person name="Jensen J."/>
            <person name="Nevin S.T."/>
            <person name="Callaghan B.P."/>
            <person name="Adams D.J."/>
            <person name="Craik D.J."/>
        </authorList>
    </citation>
    <scope>STRUCTURE BY NMR OF 50-66 (CYCLIC VC1.1)</scope>
    <scope>MUTAGENESIS OF GLY-66</scope>
</reference>
<reference key="14">
    <citation type="journal article" date="2013" name="ACS Chem. Biol.">
        <title>Dicarba alpha-conotoxin Vc1.1 analogues with differential selectivity for nicotinic acetylcholine and GABAB receptors.</title>
        <authorList>
            <person name="van Lierop B.J."/>
            <person name="Robinson S.D."/>
            <person name="Kompella S.N."/>
            <person name="Belgi A."/>
            <person name="McArthur J.R."/>
            <person name="Hung A."/>
            <person name="MacRaild C.A."/>
            <person name="Adams D.J."/>
            <person name="Norton R.S."/>
            <person name="Robinson A.J."/>
        </authorList>
    </citation>
    <scope>STRUCTURE BY NMR OF 50-65 (VC1.1 AND DICARBA ANALOGS)</scope>
    <scope>FUNCTION OF VC1.1 AND DICARBA ANALOGS</scope>
</reference>
<reference key="15">
    <citation type="journal article" date="2014" name="Angew. Chem. Int. Ed.">
        <title>Racemic and quasi-racemic X-ray structures of cyclic disulfide-rich peptide drug scaffolds.</title>
        <authorList>
            <person name="Wang C.K."/>
            <person name="King G.J."/>
            <person name="Northfield S.E."/>
            <person name="Ojeda P.G."/>
            <person name="Craik D.J."/>
        </authorList>
    </citation>
    <scope>X-RAY CRYSTALLOGRAPHY (1.7 ANGSTROMS) OF L- AND D-CYCLIC VC1.1</scope>
</reference>
<reference key="16">
    <citation type="journal article" date="2015" name="Sci. Rep.">
        <title>Less is more: design of a highly stable disulfide-deleted mutant of analgesic cyclic alpha-conotoxin Vc1.1.</title>
        <authorList>
            <person name="Yu R."/>
            <person name="Seymour V.A."/>
            <person name="Berecki G."/>
            <person name="Jia X."/>
            <person name="Akcan M."/>
            <person name="Adams D.J."/>
            <person name="Kaas Q."/>
            <person name="Craik D.J."/>
        </authorList>
    </citation>
    <scope>STRUCTURE BY NMR OF 50-66 (CYCLIC VC1.1)</scope>
</reference>
<reference key="17">
    <citation type="journal article" date="2018" name="ACS Chem. Biol.">
        <title>Structure-activity studies reveal the molecular basis for GABAB-receptor mediated inhibition of high voltage-activated calcium channels by alpha-conotoxin Vc1.1.</title>
        <authorList>
            <person name="Sadeghi M."/>
            <person name="Carstens B.B."/>
            <person name="Callaghan B.P."/>
            <person name="Daniel J.T."/>
            <person name="Tae H.S."/>
            <person name="O'Donnell T."/>
            <person name="Castro J."/>
            <person name="Brierley S.M."/>
            <person name="Adams D.J."/>
            <person name="Craik D.J."/>
            <person name="Clark R.J."/>
        </authorList>
    </citation>
    <scope>STRUCTURE BY NMR OF CYCLIC [D11A; E14A]VC1.1</scope>
    <scope>MUTAGENESIS OF ASP-60 AND GLU-63</scope>
</reference>